<protein>
    <recommendedName>
        <fullName evidence="1">Large ribosomal subunit protein bL9</fullName>
    </recommendedName>
    <alternativeName>
        <fullName evidence="3">50S ribosomal protein L9</fullName>
    </alternativeName>
</protein>
<dbReference type="EMBL" id="CP000283">
    <property type="protein sequence ID" value="ABE40214.1"/>
    <property type="molecule type" value="Genomic_DNA"/>
</dbReference>
<dbReference type="SMR" id="Q135M5"/>
<dbReference type="STRING" id="316057.RPD_2988"/>
<dbReference type="KEGG" id="rpd:RPD_2988"/>
<dbReference type="eggNOG" id="COG0359">
    <property type="taxonomic scope" value="Bacteria"/>
</dbReference>
<dbReference type="HOGENOM" id="CLU_078938_1_0_5"/>
<dbReference type="BioCyc" id="RPAL316057:RPD_RS15010-MONOMER"/>
<dbReference type="Proteomes" id="UP000001818">
    <property type="component" value="Chromosome"/>
</dbReference>
<dbReference type="GO" id="GO:1990904">
    <property type="term" value="C:ribonucleoprotein complex"/>
    <property type="evidence" value="ECO:0007669"/>
    <property type="project" value="UniProtKB-KW"/>
</dbReference>
<dbReference type="GO" id="GO:0005840">
    <property type="term" value="C:ribosome"/>
    <property type="evidence" value="ECO:0007669"/>
    <property type="project" value="UniProtKB-KW"/>
</dbReference>
<dbReference type="GO" id="GO:0019843">
    <property type="term" value="F:rRNA binding"/>
    <property type="evidence" value="ECO:0007669"/>
    <property type="project" value="UniProtKB-UniRule"/>
</dbReference>
<dbReference type="GO" id="GO:0003735">
    <property type="term" value="F:structural constituent of ribosome"/>
    <property type="evidence" value="ECO:0007669"/>
    <property type="project" value="InterPro"/>
</dbReference>
<dbReference type="GO" id="GO:0006412">
    <property type="term" value="P:translation"/>
    <property type="evidence" value="ECO:0007669"/>
    <property type="project" value="UniProtKB-UniRule"/>
</dbReference>
<dbReference type="Gene3D" id="3.10.430.100">
    <property type="entry name" value="Ribosomal protein L9, C-terminal domain"/>
    <property type="match status" value="1"/>
</dbReference>
<dbReference type="Gene3D" id="3.40.5.10">
    <property type="entry name" value="Ribosomal protein L9, N-terminal domain"/>
    <property type="match status" value="1"/>
</dbReference>
<dbReference type="HAMAP" id="MF_00503">
    <property type="entry name" value="Ribosomal_bL9"/>
    <property type="match status" value="1"/>
</dbReference>
<dbReference type="InterPro" id="IPR000244">
    <property type="entry name" value="Ribosomal_bL9"/>
</dbReference>
<dbReference type="InterPro" id="IPR009027">
    <property type="entry name" value="Ribosomal_bL9/RNase_H1_N"/>
</dbReference>
<dbReference type="InterPro" id="IPR020594">
    <property type="entry name" value="Ribosomal_bL9_bac/chp"/>
</dbReference>
<dbReference type="InterPro" id="IPR020069">
    <property type="entry name" value="Ribosomal_bL9_C"/>
</dbReference>
<dbReference type="InterPro" id="IPR036791">
    <property type="entry name" value="Ribosomal_bL9_C_sf"/>
</dbReference>
<dbReference type="InterPro" id="IPR020070">
    <property type="entry name" value="Ribosomal_bL9_N"/>
</dbReference>
<dbReference type="InterPro" id="IPR036935">
    <property type="entry name" value="Ribosomal_bL9_N_sf"/>
</dbReference>
<dbReference type="NCBIfam" id="TIGR00158">
    <property type="entry name" value="L9"/>
    <property type="match status" value="1"/>
</dbReference>
<dbReference type="PANTHER" id="PTHR21368">
    <property type="entry name" value="50S RIBOSOMAL PROTEIN L9"/>
    <property type="match status" value="1"/>
</dbReference>
<dbReference type="Pfam" id="PF03948">
    <property type="entry name" value="Ribosomal_L9_C"/>
    <property type="match status" value="1"/>
</dbReference>
<dbReference type="Pfam" id="PF01281">
    <property type="entry name" value="Ribosomal_L9_N"/>
    <property type="match status" value="1"/>
</dbReference>
<dbReference type="SUPFAM" id="SSF55658">
    <property type="entry name" value="L9 N-domain-like"/>
    <property type="match status" value="1"/>
</dbReference>
<dbReference type="SUPFAM" id="SSF55653">
    <property type="entry name" value="Ribosomal protein L9 C-domain"/>
    <property type="match status" value="1"/>
</dbReference>
<dbReference type="PROSITE" id="PS00651">
    <property type="entry name" value="RIBOSOMAL_L9"/>
    <property type="match status" value="1"/>
</dbReference>
<accession>Q135M5</accession>
<reference key="1">
    <citation type="submission" date="2006-03" db="EMBL/GenBank/DDBJ databases">
        <title>Complete sequence of Rhodopseudomonas palustris BisB5.</title>
        <authorList>
            <consortium name="US DOE Joint Genome Institute"/>
            <person name="Copeland A."/>
            <person name="Lucas S."/>
            <person name="Lapidus A."/>
            <person name="Barry K."/>
            <person name="Detter J.C."/>
            <person name="Glavina del Rio T."/>
            <person name="Hammon N."/>
            <person name="Israni S."/>
            <person name="Dalin E."/>
            <person name="Tice H."/>
            <person name="Pitluck S."/>
            <person name="Chain P."/>
            <person name="Malfatti S."/>
            <person name="Shin M."/>
            <person name="Vergez L."/>
            <person name="Schmutz J."/>
            <person name="Larimer F."/>
            <person name="Land M."/>
            <person name="Hauser L."/>
            <person name="Pelletier D.A."/>
            <person name="Kyrpides N."/>
            <person name="Lykidis A."/>
            <person name="Oda Y."/>
            <person name="Harwood C.S."/>
            <person name="Richardson P."/>
        </authorList>
    </citation>
    <scope>NUCLEOTIDE SEQUENCE [LARGE SCALE GENOMIC DNA]</scope>
    <source>
        <strain>BisB5</strain>
    </source>
</reference>
<name>RL9_RHOPS</name>
<evidence type="ECO:0000255" key="1">
    <source>
        <dbReference type="HAMAP-Rule" id="MF_00503"/>
    </source>
</evidence>
<evidence type="ECO:0000256" key="2">
    <source>
        <dbReference type="SAM" id="MobiDB-lite"/>
    </source>
</evidence>
<evidence type="ECO:0000305" key="3"/>
<proteinExistence type="inferred from homology"/>
<keyword id="KW-0687">Ribonucleoprotein</keyword>
<keyword id="KW-0689">Ribosomal protein</keyword>
<keyword id="KW-0694">RNA-binding</keyword>
<keyword id="KW-0699">rRNA-binding</keyword>
<comment type="function">
    <text evidence="1">Binds to the 23S rRNA.</text>
</comment>
<comment type="similarity">
    <text evidence="1">Belongs to the bacterial ribosomal protein bL9 family.</text>
</comment>
<organism>
    <name type="scientific">Rhodopseudomonas palustris (strain BisB5)</name>
    <dbReference type="NCBI Taxonomy" id="316057"/>
    <lineage>
        <taxon>Bacteria</taxon>
        <taxon>Pseudomonadati</taxon>
        <taxon>Pseudomonadota</taxon>
        <taxon>Alphaproteobacteria</taxon>
        <taxon>Hyphomicrobiales</taxon>
        <taxon>Nitrobacteraceae</taxon>
        <taxon>Rhodopseudomonas</taxon>
    </lineage>
</organism>
<sequence>MEVILLERVAKLGQMGELVRVKDGFARNFLLPRGKALRATAANRDKYEHMKADLEARNIEAKAEAAKVAEKIDGKNVIVIRQASETGQLFGSVSVRDIVTSFEADGVKITRSQILLDAPIKTIGRHTIEVAVHPEVEVGVSVTVARSVEEAERINRGEDISSRREDQDAAAEAIAAAGEFFDPDAQQDEEPEQQ</sequence>
<gene>
    <name evidence="1" type="primary">rplI</name>
    <name type="ordered locus">RPD_2988</name>
</gene>
<feature type="chain" id="PRO_1000014845" description="Large ribosomal subunit protein bL9">
    <location>
        <begin position="1"/>
        <end position="194"/>
    </location>
</feature>
<feature type="region of interest" description="Disordered" evidence="2">
    <location>
        <begin position="156"/>
        <end position="194"/>
    </location>
</feature>
<feature type="compositionally biased region" description="Basic and acidic residues" evidence="2">
    <location>
        <begin position="156"/>
        <end position="167"/>
    </location>
</feature>
<feature type="compositionally biased region" description="Acidic residues" evidence="2">
    <location>
        <begin position="181"/>
        <end position="194"/>
    </location>
</feature>